<protein>
    <recommendedName>
        <fullName evidence="13">COMPASS component SPP1</fullName>
    </recommendedName>
    <alternativeName>
        <fullName evidence="13">Complex proteins associated with SET1 protein SPP1</fullName>
    </alternativeName>
    <alternativeName>
        <fullName evidence="13">Set1C component SPP1</fullName>
    </alternativeName>
    <alternativeName>
        <fullName>Suppressor of PRP protein 1</fullName>
    </alternativeName>
</protein>
<organism>
    <name type="scientific">Saccharomyces cerevisiae (strain ATCC 204508 / S288c)</name>
    <name type="common">Baker's yeast</name>
    <dbReference type="NCBI Taxonomy" id="559292"/>
    <lineage>
        <taxon>Eukaryota</taxon>
        <taxon>Fungi</taxon>
        <taxon>Dikarya</taxon>
        <taxon>Ascomycota</taxon>
        <taxon>Saccharomycotina</taxon>
        <taxon>Saccharomycetes</taxon>
        <taxon>Saccharomycetales</taxon>
        <taxon>Saccharomycetaceae</taxon>
        <taxon>Saccharomyces</taxon>
    </lineage>
</organism>
<dbReference type="EMBL" id="U43703">
    <property type="protein sequence ID" value="AAB68222.1"/>
    <property type="molecule type" value="Genomic_DNA"/>
</dbReference>
<dbReference type="EMBL" id="BK006949">
    <property type="protein sequence ID" value="DAA11296.1"/>
    <property type="molecule type" value="Genomic_DNA"/>
</dbReference>
<dbReference type="PIR" id="S69047">
    <property type="entry name" value="S69047"/>
</dbReference>
<dbReference type="RefSeq" id="NP_015187.1">
    <property type="nucleotide sequence ID" value="NM_001183952.1"/>
</dbReference>
<dbReference type="PDB" id="6BX3">
    <property type="method" value="EM"/>
    <property type="resolution" value="4.30 A"/>
    <property type="chains" value="F=117-353"/>
</dbReference>
<dbReference type="PDB" id="6J2P">
    <property type="method" value="X-ray"/>
    <property type="resolution" value="2.85 A"/>
    <property type="chains" value="A/B/C/D=1-124"/>
</dbReference>
<dbReference type="PDB" id="6VEN">
    <property type="method" value="EM"/>
    <property type="resolution" value="3.37 A"/>
    <property type="chains" value="R=2-353"/>
</dbReference>
<dbReference type="PDBsum" id="6BX3"/>
<dbReference type="PDBsum" id="6J2P"/>
<dbReference type="PDBsum" id="6VEN"/>
<dbReference type="EMDB" id="EMD-21157"/>
<dbReference type="EMDB" id="EMD-7303"/>
<dbReference type="SMR" id="Q03012"/>
<dbReference type="BioGRID" id="36044">
    <property type="interactions" value="170"/>
</dbReference>
<dbReference type="ComplexPortal" id="CPX-1039">
    <property type="entry name" value="COMPASS complex"/>
</dbReference>
<dbReference type="DIP" id="DIP-2946N"/>
<dbReference type="FunCoup" id="Q03012">
    <property type="interactions" value="147"/>
</dbReference>
<dbReference type="IntAct" id="Q03012">
    <property type="interactions" value="16"/>
</dbReference>
<dbReference type="MINT" id="Q03012"/>
<dbReference type="STRING" id="4932.YPL138C"/>
<dbReference type="iPTMnet" id="Q03012"/>
<dbReference type="PaxDb" id="4932-YPL138C"/>
<dbReference type="PeptideAtlas" id="Q03012"/>
<dbReference type="EnsemblFungi" id="YPL138C_mRNA">
    <property type="protein sequence ID" value="YPL138C"/>
    <property type="gene ID" value="YPL138C"/>
</dbReference>
<dbReference type="GeneID" id="855965"/>
<dbReference type="KEGG" id="sce:YPL138C"/>
<dbReference type="AGR" id="SGD:S000006059"/>
<dbReference type="SGD" id="S000006059">
    <property type="gene designation" value="SPP1"/>
</dbReference>
<dbReference type="VEuPathDB" id="FungiDB:YPL138C"/>
<dbReference type="eggNOG" id="KOG1632">
    <property type="taxonomic scope" value="Eukaryota"/>
</dbReference>
<dbReference type="HOGENOM" id="CLU_045707_0_0_1"/>
<dbReference type="InParanoid" id="Q03012"/>
<dbReference type="OMA" id="WCPPYSS"/>
<dbReference type="OrthoDB" id="436852at2759"/>
<dbReference type="BioCyc" id="YEAST:G3O-34036-MONOMER"/>
<dbReference type="Reactome" id="R-SCE-9772755">
    <property type="pathway name" value="Formation of WDR5-containing histone-modifying complexes"/>
</dbReference>
<dbReference type="BioGRID-ORCS" id="855965">
    <property type="hits" value="3 hits in 10 CRISPR screens"/>
</dbReference>
<dbReference type="PRO" id="PR:Q03012"/>
<dbReference type="Proteomes" id="UP000002311">
    <property type="component" value="Chromosome XVI"/>
</dbReference>
<dbReference type="RNAct" id="Q03012">
    <property type="molecule type" value="protein"/>
</dbReference>
<dbReference type="GO" id="GO:0000781">
    <property type="term" value="C:chromosome, telomeric region"/>
    <property type="evidence" value="ECO:0007669"/>
    <property type="project" value="GOC"/>
</dbReference>
<dbReference type="GO" id="GO:0005829">
    <property type="term" value="C:cytosol"/>
    <property type="evidence" value="ECO:0000314"/>
    <property type="project" value="SGD"/>
</dbReference>
<dbReference type="GO" id="GO:0005634">
    <property type="term" value="C:nucleus"/>
    <property type="evidence" value="ECO:0000314"/>
    <property type="project" value="SGD"/>
</dbReference>
<dbReference type="GO" id="GO:0048188">
    <property type="term" value="C:Set1C/COMPASS complex"/>
    <property type="evidence" value="ECO:0000314"/>
    <property type="project" value="UniProtKB"/>
</dbReference>
<dbReference type="GO" id="GO:0003682">
    <property type="term" value="F:chromatin binding"/>
    <property type="evidence" value="ECO:0000314"/>
    <property type="project" value="SGD"/>
</dbReference>
<dbReference type="GO" id="GO:0035064">
    <property type="term" value="F:methylated histone binding"/>
    <property type="evidence" value="ECO:0000314"/>
    <property type="project" value="SGD"/>
</dbReference>
<dbReference type="GO" id="GO:0008270">
    <property type="term" value="F:zinc ion binding"/>
    <property type="evidence" value="ECO:0007669"/>
    <property type="project" value="UniProtKB-KW"/>
</dbReference>
<dbReference type="GO" id="GO:0045893">
    <property type="term" value="P:positive regulation of DNA-templated transcription"/>
    <property type="evidence" value="ECO:0000318"/>
    <property type="project" value="GO_Central"/>
</dbReference>
<dbReference type="GO" id="GO:0006355">
    <property type="term" value="P:regulation of DNA-templated transcription"/>
    <property type="evidence" value="ECO:0000315"/>
    <property type="project" value="SGD"/>
</dbReference>
<dbReference type="GO" id="GO:1903341">
    <property type="term" value="P:regulation of meiotic DNA double-strand break formation"/>
    <property type="evidence" value="ECO:0000315"/>
    <property type="project" value="SGD"/>
</dbReference>
<dbReference type="GO" id="GO:0031509">
    <property type="term" value="P:subtelomeric heterochromatin formation"/>
    <property type="evidence" value="ECO:0000315"/>
    <property type="project" value="SGD"/>
</dbReference>
<dbReference type="CDD" id="cd16039">
    <property type="entry name" value="PHD_SPP1"/>
    <property type="match status" value="1"/>
</dbReference>
<dbReference type="FunFam" id="3.30.40.10:FF:000759">
    <property type="entry name" value="COMPASS component SPP1"/>
    <property type="match status" value="1"/>
</dbReference>
<dbReference type="Gene3D" id="3.30.40.10">
    <property type="entry name" value="Zinc/RING finger domain, C3HC4 (zinc finger)"/>
    <property type="match status" value="1"/>
</dbReference>
<dbReference type="InterPro" id="IPR037869">
    <property type="entry name" value="Spp1/CFP1"/>
</dbReference>
<dbReference type="InterPro" id="IPR019786">
    <property type="entry name" value="Zinc_finger_PHD-type_CS"/>
</dbReference>
<dbReference type="InterPro" id="IPR011011">
    <property type="entry name" value="Znf_FYVE_PHD"/>
</dbReference>
<dbReference type="InterPro" id="IPR001965">
    <property type="entry name" value="Znf_PHD"/>
</dbReference>
<dbReference type="InterPro" id="IPR019787">
    <property type="entry name" value="Znf_PHD-finger"/>
</dbReference>
<dbReference type="InterPro" id="IPR013083">
    <property type="entry name" value="Znf_RING/FYVE/PHD"/>
</dbReference>
<dbReference type="PANTHER" id="PTHR46174">
    <property type="entry name" value="CXXC-TYPE ZINC FINGER PROTEIN 1"/>
    <property type="match status" value="1"/>
</dbReference>
<dbReference type="PANTHER" id="PTHR46174:SF1">
    <property type="entry name" value="CXXC-TYPE ZINC FINGER PROTEIN 1"/>
    <property type="match status" value="1"/>
</dbReference>
<dbReference type="Pfam" id="PF00628">
    <property type="entry name" value="PHD"/>
    <property type="match status" value="1"/>
</dbReference>
<dbReference type="SMART" id="SM00249">
    <property type="entry name" value="PHD"/>
    <property type="match status" value="1"/>
</dbReference>
<dbReference type="SUPFAM" id="SSF57903">
    <property type="entry name" value="FYVE/PHD zinc finger"/>
    <property type="match status" value="1"/>
</dbReference>
<dbReference type="PROSITE" id="PS01359">
    <property type="entry name" value="ZF_PHD_1"/>
    <property type="match status" value="1"/>
</dbReference>
<dbReference type="PROSITE" id="PS50016">
    <property type="entry name" value="ZF_PHD_2"/>
    <property type="match status" value="1"/>
</dbReference>
<comment type="function">
    <text evidence="4 5 6 8 9 10 11">Component of the Set1C/COMPASS complex that specifically mono-, di- and trimethylates histone H3 to form H3K4me1/2/3, which subsequently plays a role in telomere length maintenance and transcription elongation regulation (PubMed:11742990, PubMed:11752412, PubMed:11805083). COMPASS recognizes ubiquitinated H2B on one face of the nucleosome which stimulates the methylation of H3 on the opposing face (PubMed:31922488). SPP1/CPS40 can recognize methylated histone lysine residue H3K4me3 or unmethylated H3K4 (PubMed:30100186, PubMed:31253666). Stimulates the RNA binding activity of SET1 (PubMed:29071121).</text>
</comment>
<comment type="subunit">
    <text evidence="3 4 8 9 11">Component of the Set1C/COMPASS complex which consists of SET1(2), BRE2(2), SPP1(2), SDC1(1), SHG1(1), SWD1(1), SWD2(1), and SWD3(1).</text>
</comment>
<comment type="interaction">
    <interactant intactId="EBI-32540">
        <id>Q03012</id>
    </interactant>
    <interactant intactId="EBI-10742">
        <id>P21651</id>
        <label>REC107</label>
    </interactant>
    <organismsDiffer>false</organismsDiffer>
    <experiments>3</experiments>
</comment>
<comment type="interaction">
    <interactant intactId="EBI-32540">
        <id>Q03012</id>
    </interactant>
    <interactant intactId="EBI-26608">
        <id>P36104</id>
        <label>SWD2</label>
    </interactant>
    <organismsDiffer>false</organismsDiffer>
    <experiments>4</experiments>
</comment>
<comment type="subcellular location">
    <subcellularLocation>
        <location evidence="15">Nucleus</location>
    </subcellularLocation>
</comment>
<comment type="domain">
    <text evidence="10">The PHD finger is responsible for methylated H3K4 recognition.</text>
</comment>
<comment type="domain">
    <text evidence="10">The C3H-type zinc finger is distinctly different from CCCH-type zinc fingers in both the amino acid sequence and the overall structure. Most CCCH motifs contain the C-X(7-9)-C-X(4-6)-C-X(3-4)-H sequence, while SPP11 employs the C-X(4)-C-X(10)-C-X(3)-H sequence to coordinate a zinc ion (PubMed:31253666). The C3H-type zinc finger is necessary to ensure the overall structural stability (PubMed:31253666).</text>
</comment>
<comment type="miscellaneous">
    <text evidence="7">Present with 1680 molecules/cell in log phase SD medium.</text>
</comment>
<evidence type="ECO:0000255" key="1">
    <source>
        <dbReference type="PROSITE-ProRule" id="PRU00146"/>
    </source>
</evidence>
<evidence type="ECO:0000256" key="2">
    <source>
        <dbReference type="SAM" id="MobiDB-lite"/>
    </source>
</evidence>
<evidence type="ECO:0000269" key="3">
    <source>
    </source>
</evidence>
<evidence type="ECO:0000269" key="4">
    <source>
    </source>
</evidence>
<evidence type="ECO:0000269" key="5">
    <source>
    </source>
</evidence>
<evidence type="ECO:0000269" key="6">
    <source>
    </source>
</evidence>
<evidence type="ECO:0000269" key="7">
    <source>
    </source>
</evidence>
<evidence type="ECO:0000269" key="8">
    <source>
    </source>
</evidence>
<evidence type="ECO:0000269" key="9">
    <source>
    </source>
</evidence>
<evidence type="ECO:0000269" key="10">
    <source>
    </source>
</evidence>
<evidence type="ECO:0000269" key="11">
    <source>
    </source>
</evidence>
<evidence type="ECO:0000303" key="12">
    <source>
    </source>
</evidence>
<evidence type="ECO:0000303" key="13">
    <source>
    </source>
</evidence>
<evidence type="ECO:0000303" key="14">
    <source>
    </source>
</evidence>
<evidence type="ECO:0000305" key="15"/>
<evidence type="ECO:0007744" key="16">
    <source>
        <dbReference type="PDB" id="6BX3"/>
    </source>
</evidence>
<evidence type="ECO:0007744" key="17">
    <source>
        <dbReference type="PDB" id="6J2P"/>
    </source>
</evidence>
<evidence type="ECO:0007744" key="18">
    <source>
        <dbReference type="PDB" id="6VEN"/>
    </source>
</evidence>
<evidence type="ECO:0007744" key="19">
    <source>
    </source>
</evidence>
<evidence type="ECO:0007829" key="20">
    <source>
        <dbReference type="PDB" id="6J2P"/>
    </source>
</evidence>
<evidence type="ECO:0007829" key="21">
    <source>
        <dbReference type="PDB" id="6VEN"/>
    </source>
</evidence>
<feature type="chain" id="PRO_0000059338" description="COMPASS component SPP1">
    <location>
        <begin position="1"/>
        <end position="353"/>
    </location>
</feature>
<feature type="zinc finger region" description="PHD-type" evidence="1 10 17">
    <location>
        <begin position="22"/>
        <end position="72"/>
    </location>
</feature>
<feature type="region of interest" description="Non coventional C3H-type zinc finger" evidence="10 17">
    <location>
        <begin position="83"/>
        <end position="124"/>
    </location>
</feature>
<feature type="region of interest" description="Disordered" evidence="2">
    <location>
        <begin position="235"/>
        <end position="255"/>
    </location>
</feature>
<feature type="compositionally biased region" description="Basic and acidic residues" evidence="2">
    <location>
        <begin position="235"/>
        <end position="244"/>
    </location>
</feature>
<feature type="compositionally biased region" description="Basic residues" evidence="2">
    <location>
        <begin position="245"/>
        <end position="255"/>
    </location>
</feature>
<feature type="binding site" evidence="1 10 17">
    <location>
        <position position="25"/>
    </location>
    <ligand>
        <name>Zn(2+)</name>
        <dbReference type="ChEBI" id="CHEBI:29105"/>
        <label>1</label>
    </ligand>
</feature>
<feature type="binding site" evidence="1 10 17">
    <location>
        <position position="27"/>
    </location>
    <ligand>
        <name>Zn(2+)</name>
        <dbReference type="ChEBI" id="CHEBI:29105"/>
        <label>1</label>
    </ligand>
</feature>
<feature type="binding site" evidence="1 10 17">
    <location>
        <position position="39"/>
    </location>
    <ligand>
        <name>Zn(2+)</name>
        <dbReference type="ChEBI" id="CHEBI:29105"/>
        <label>2</label>
    </ligand>
</feature>
<feature type="binding site" evidence="1 10 17">
    <location>
        <position position="42"/>
    </location>
    <ligand>
        <name>Zn(2+)</name>
        <dbReference type="ChEBI" id="CHEBI:29105"/>
        <label>2</label>
    </ligand>
</feature>
<feature type="binding site" evidence="1 10 17">
    <location>
        <position position="47"/>
    </location>
    <ligand>
        <name>Zn(2+)</name>
        <dbReference type="ChEBI" id="CHEBI:29105"/>
        <label>1</label>
    </ligand>
</feature>
<feature type="binding site" evidence="1 10 17">
    <location>
        <position position="50"/>
    </location>
    <ligand>
        <name>Zn(2+)</name>
        <dbReference type="ChEBI" id="CHEBI:29105"/>
        <label>1</label>
    </ligand>
</feature>
<feature type="binding site" evidence="1 10 17">
    <location>
        <position position="66"/>
    </location>
    <ligand>
        <name>Zn(2+)</name>
        <dbReference type="ChEBI" id="CHEBI:29105"/>
        <label>2</label>
    </ligand>
</feature>
<feature type="binding site" evidence="1 10 17">
    <location>
        <position position="69"/>
    </location>
    <ligand>
        <name>Zn(2+)</name>
        <dbReference type="ChEBI" id="CHEBI:29105"/>
        <label>2</label>
    </ligand>
</feature>
<feature type="binding site" evidence="10 17">
    <location>
        <position position="97"/>
    </location>
    <ligand>
        <name>Zn(2+)</name>
        <dbReference type="ChEBI" id="CHEBI:29105"/>
        <label>3</label>
    </ligand>
</feature>
<feature type="binding site" evidence="10 17">
    <location>
        <position position="102"/>
    </location>
    <ligand>
        <name>Zn(2+)</name>
        <dbReference type="ChEBI" id="CHEBI:29105"/>
        <label>3</label>
    </ligand>
</feature>
<feature type="binding site" evidence="10 17">
    <location>
        <position position="113"/>
    </location>
    <ligand>
        <name>Zn(2+)</name>
        <dbReference type="ChEBI" id="CHEBI:29105"/>
        <label>3</label>
    </ligand>
</feature>
<feature type="binding site" evidence="10 17">
    <location>
        <position position="117"/>
    </location>
    <ligand>
        <name>Zn(2+)</name>
        <dbReference type="ChEBI" id="CHEBI:29105"/>
        <label>3</label>
    </ligand>
</feature>
<feature type="modified residue" description="Phosphoserine" evidence="19">
    <location>
        <position position="87"/>
    </location>
</feature>
<feature type="turn" evidence="20">
    <location>
        <begin position="25"/>
        <end position="28"/>
    </location>
</feature>
<feature type="strand" evidence="20">
    <location>
        <begin position="36"/>
        <end position="38"/>
    </location>
</feature>
<feature type="strand" evidence="20">
    <location>
        <begin position="40"/>
        <end position="43"/>
    </location>
</feature>
<feature type="strand" evidence="20">
    <location>
        <begin position="45"/>
        <end position="47"/>
    </location>
</feature>
<feature type="helix" evidence="20">
    <location>
        <begin position="48"/>
        <end position="51"/>
    </location>
</feature>
<feature type="helix" evidence="20">
    <location>
        <begin position="55"/>
        <end position="57"/>
    </location>
</feature>
<feature type="strand" evidence="20">
    <location>
        <begin position="61"/>
        <end position="63"/>
    </location>
</feature>
<feature type="helix" evidence="20">
    <location>
        <begin position="67"/>
        <end position="70"/>
    </location>
</feature>
<feature type="strand" evidence="20">
    <location>
        <begin position="73"/>
        <end position="76"/>
    </location>
</feature>
<feature type="strand" evidence="20">
    <location>
        <begin position="98"/>
        <end position="101"/>
    </location>
</feature>
<feature type="strand" evidence="20">
    <location>
        <begin position="111"/>
        <end position="114"/>
    </location>
</feature>
<feature type="helix" evidence="20">
    <location>
        <begin position="115"/>
        <end position="117"/>
    </location>
</feature>
<feature type="helix" evidence="21">
    <location>
        <begin position="203"/>
        <end position="240"/>
    </location>
</feature>
<feature type="strand" evidence="21">
    <location>
        <begin position="266"/>
        <end position="268"/>
    </location>
</feature>
<feature type="helix" evidence="21">
    <location>
        <begin position="279"/>
        <end position="282"/>
    </location>
</feature>
<feature type="strand" evidence="21">
    <location>
        <begin position="291"/>
        <end position="293"/>
    </location>
</feature>
<feature type="strand" evidence="21">
    <location>
        <begin position="298"/>
        <end position="300"/>
    </location>
</feature>
<feature type="turn" evidence="21">
    <location>
        <begin position="307"/>
        <end position="310"/>
    </location>
</feature>
<feature type="helix" evidence="21">
    <location>
        <begin position="311"/>
        <end position="348"/>
    </location>
</feature>
<sequence length="353" mass="41468">MSLPQWCPPHSTLKRNPTTGEDVYCICKRPDYGELMVGCDGCDDWFHFTCLHIPEQFKDLVFSFYCPYCQAGITGKNKDAIINGEGSLPKTLWKRKCRISDCYKPCLQDSKYCSEEHGREFVNDIWSRLKTDEDRAVVKKMVEQTGHIDKFKKFGQLDFIDNNIVVKTDDEKEIFDQIVVRDMTLKTLEDDLQEVQEISLPLFKKKLELLEVYLGWLDNVYTEMRKLDDDAASHVECGKEDSKGTKRKKKKNSSRSRARKNICGYCSTYERIPCSVEEFVRDFGSNEEATKIHEVCTKWKCNRHLDWVSTNQEQYLQQIDSLESMQERLQHLIQARKKQLNIQYYEEILRRGL</sequence>
<keyword id="KW-0002">3D-structure</keyword>
<keyword id="KW-0479">Metal-binding</keyword>
<keyword id="KW-0539">Nucleus</keyword>
<keyword id="KW-0597">Phosphoprotein</keyword>
<keyword id="KW-1185">Reference proteome</keyword>
<keyword id="KW-0862">Zinc</keyword>
<keyword id="KW-0863">Zinc-finger</keyword>
<reference key="1">
    <citation type="journal article" date="1997" name="Nature">
        <title>The nucleotide sequence of Saccharomyces cerevisiae chromosome XVI.</title>
        <authorList>
            <person name="Bussey H."/>
            <person name="Storms R.K."/>
            <person name="Ahmed A."/>
            <person name="Albermann K."/>
            <person name="Allen E."/>
            <person name="Ansorge W."/>
            <person name="Araujo R."/>
            <person name="Aparicio A."/>
            <person name="Barrell B.G."/>
            <person name="Badcock K."/>
            <person name="Benes V."/>
            <person name="Botstein D."/>
            <person name="Bowman S."/>
            <person name="Brueckner M."/>
            <person name="Carpenter J."/>
            <person name="Cherry J.M."/>
            <person name="Chung E."/>
            <person name="Churcher C.M."/>
            <person name="Coster F."/>
            <person name="Davis K."/>
            <person name="Davis R.W."/>
            <person name="Dietrich F.S."/>
            <person name="Delius H."/>
            <person name="DiPaolo T."/>
            <person name="Dubois E."/>
            <person name="Duesterhoeft A."/>
            <person name="Duncan M."/>
            <person name="Floeth M."/>
            <person name="Fortin N."/>
            <person name="Friesen J.D."/>
            <person name="Fritz C."/>
            <person name="Goffeau A."/>
            <person name="Hall J."/>
            <person name="Hebling U."/>
            <person name="Heumann K."/>
            <person name="Hilbert H."/>
            <person name="Hillier L.W."/>
            <person name="Hunicke-Smith S."/>
            <person name="Hyman R.W."/>
            <person name="Johnston M."/>
            <person name="Kalman S."/>
            <person name="Kleine K."/>
            <person name="Komp C."/>
            <person name="Kurdi O."/>
            <person name="Lashkari D."/>
            <person name="Lew H."/>
            <person name="Lin A."/>
            <person name="Lin D."/>
            <person name="Louis E.J."/>
            <person name="Marathe R."/>
            <person name="Messenguy F."/>
            <person name="Mewes H.-W."/>
            <person name="Mirtipati S."/>
            <person name="Moestl D."/>
            <person name="Mueller-Auer S."/>
            <person name="Namath A."/>
            <person name="Nentwich U."/>
            <person name="Oefner P."/>
            <person name="Pearson D."/>
            <person name="Petel F.X."/>
            <person name="Pohl T.M."/>
            <person name="Purnelle B."/>
            <person name="Rajandream M.A."/>
            <person name="Rechmann S."/>
            <person name="Rieger M."/>
            <person name="Riles L."/>
            <person name="Roberts D."/>
            <person name="Schaefer M."/>
            <person name="Scharfe M."/>
            <person name="Scherens B."/>
            <person name="Schramm S."/>
            <person name="Schroeder M."/>
            <person name="Sdicu A.-M."/>
            <person name="Tettelin H."/>
            <person name="Urrestarazu L.A."/>
            <person name="Ushinsky S."/>
            <person name="Vierendeels F."/>
            <person name="Vissers S."/>
            <person name="Voss H."/>
            <person name="Walsh S.V."/>
            <person name="Wambutt R."/>
            <person name="Wang Y."/>
            <person name="Wedler E."/>
            <person name="Wedler H."/>
            <person name="Winnett E."/>
            <person name="Zhong W.-W."/>
            <person name="Zollner A."/>
            <person name="Vo D.H."/>
            <person name="Hani J."/>
        </authorList>
    </citation>
    <scope>NUCLEOTIDE SEQUENCE [LARGE SCALE GENOMIC DNA]</scope>
    <source>
        <strain>ATCC 204508 / S288c</strain>
    </source>
</reference>
<reference key="2">
    <citation type="journal article" date="2014" name="G3 (Bethesda)">
        <title>The reference genome sequence of Saccharomyces cerevisiae: Then and now.</title>
        <authorList>
            <person name="Engel S.R."/>
            <person name="Dietrich F.S."/>
            <person name="Fisk D.G."/>
            <person name="Binkley G."/>
            <person name="Balakrishnan R."/>
            <person name="Costanzo M.C."/>
            <person name="Dwight S.S."/>
            <person name="Hitz B.C."/>
            <person name="Karra K."/>
            <person name="Nash R.S."/>
            <person name="Weng S."/>
            <person name="Wong E.D."/>
            <person name="Lloyd P."/>
            <person name="Skrzypek M.S."/>
            <person name="Miyasato S.R."/>
            <person name="Simison M."/>
            <person name="Cherry J.M."/>
        </authorList>
    </citation>
    <scope>GENOME REANNOTATION</scope>
    <source>
        <strain>ATCC 204508 / S288c</strain>
    </source>
</reference>
<reference key="3">
    <citation type="journal article" date="2001" name="EMBO J.">
        <title>The Saccharomyces cerevisiae Set1 complex includes an Ash2 homologue and methylates histone 3 lysine 4.</title>
        <authorList>
            <person name="Roguev A."/>
            <person name="Schaft D."/>
            <person name="Shevchenko A."/>
            <person name="Pijnappel W.W.M.P."/>
            <person name="Wilm M."/>
            <person name="Aasland R."/>
            <person name="Stewart A.F."/>
        </authorList>
    </citation>
    <scope>FUNCTION</scope>
    <scope>SUBUNIT</scope>
</reference>
<reference key="4">
    <citation type="journal article" date="2002" name="J. Biol. Chem.">
        <title>COMPASS, a histone H3 (Lysine 4) methyltransferase required for telomeric silencing of gene expression.</title>
        <authorList>
            <person name="Krogan N.J."/>
            <person name="Dover J."/>
            <person name="Khorrami S."/>
            <person name="Greenblatt J.F."/>
            <person name="Schneider J."/>
            <person name="Johnston M."/>
            <person name="Shilatifard A."/>
        </authorList>
    </citation>
    <scope>FUNCTION</scope>
</reference>
<reference key="5">
    <citation type="journal article" date="2002" name="Proc. Natl. Acad. Sci. U.S.A.">
        <title>A trithorax-group complex purified from Saccharomyces cerevisiae is required for methylation of histone H3.</title>
        <authorList>
            <person name="Nagy P.L."/>
            <person name="Griesenbeck J."/>
            <person name="Kornberg R.D."/>
            <person name="Cleary M.L."/>
        </authorList>
    </citation>
    <scope>FUNCTION</scope>
</reference>
<reference key="6">
    <citation type="journal article" date="2001" name="Proc. Natl. Acad. Sci. U.S.A.">
        <title>COMPASS: a complex of proteins associated with a trithorax-related SET domain protein.</title>
        <authorList>
            <person name="Miller T."/>
            <person name="Krogan N.J."/>
            <person name="Dover J."/>
            <person name="Erdjument-Bromage H."/>
            <person name="Tempst P."/>
            <person name="Johnston M."/>
            <person name="Greenblatt J.F."/>
            <person name="Shilatifard A."/>
        </authorList>
    </citation>
    <scope>SUBUNIT</scope>
</reference>
<reference key="7">
    <citation type="journal article" date="2003" name="Nature">
        <title>Global analysis of protein expression in yeast.</title>
        <authorList>
            <person name="Ghaemmaghami S."/>
            <person name="Huh W.-K."/>
            <person name="Bower K."/>
            <person name="Howson R.W."/>
            <person name="Belle A."/>
            <person name="Dephoure N."/>
            <person name="O'Shea E.K."/>
            <person name="Weissman J.S."/>
        </authorList>
    </citation>
    <scope>LEVEL OF PROTEIN EXPRESSION [LARGE SCALE ANALYSIS]</scope>
</reference>
<reference key="8">
    <citation type="journal article" date="2009" name="Science">
        <title>Global analysis of Cdk1 substrate phosphorylation sites provides insights into evolution.</title>
        <authorList>
            <person name="Holt L.J."/>
            <person name="Tuch B.B."/>
            <person name="Villen J."/>
            <person name="Johnson A.D."/>
            <person name="Gygi S.P."/>
            <person name="Morgan D.O."/>
        </authorList>
    </citation>
    <scope>PHOSPHORYLATION [LARGE SCALE ANALYSIS] AT SER-87</scope>
    <scope>IDENTIFICATION BY MASS SPECTROMETRY [LARGE SCALE ANALYSIS]</scope>
</reference>
<reference key="9">
    <citation type="journal article" date="2017" name="Cell Discov.">
        <title>Binding to RNA regulates Set1 function.</title>
        <authorList>
            <person name="Luciano P."/>
            <person name="Jeon J."/>
            <person name="El-Kaoutari A."/>
            <person name="Challal D."/>
            <person name="Bonnet A."/>
            <person name="Barucco M."/>
            <person name="Candelli T."/>
            <person name="Jourquin F."/>
            <person name="Lesage P."/>
            <person name="Kim J."/>
            <person name="Libri D."/>
            <person name="Geli V."/>
        </authorList>
    </citation>
    <scope>FUNCTION</scope>
    <scope>IDENTIFICATION IN THE SET1C/COMPASS COMPLEX</scope>
</reference>
<reference evidence="16" key="10">
    <citation type="journal article" date="2018" name="Cell">
        <title>Structure and conformational dynamics of a COMPASS histone H3K4 methyltransferase complex.</title>
        <authorList>
            <person name="Qu Q."/>
            <person name="Takahashi Y.H."/>
            <person name="Yang Y."/>
            <person name="Hu H."/>
            <person name="Zhang Y."/>
            <person name="Brunzelle J.S."/>
            <person name="Couture J.F."/>
            <person name="Shilatifard A."/>
            <person name="Skiniotis G."/>
        </authorList>
    </citation>
    <scope>STRUCTURE BY ELECTRON MICROSCOPY (4.30 ANGSTROMS) OF 117-353 WITHIN THE CORE COMPASS COMPLEX</scope>
    <scope>SUBUNIT</scope>
    <scope>FUNCTION</scope>
</reference>
<reference evidence="17" key="11">
    <citation type="journal article" date="2019" name="Biochem. J.">
        <title>Structural basis for histone H3K4me3 recognition by the N-terminal domain of the PHD finger protein Spp1.</title>
        <authorList>
            <person name="He C."/>
            <person name="Liu N."/>
            <person name="Xie D."/>
            <person name="Liu Y."/>
            <person name="Xiao Y."/>
            <person name="Li F."/>
        </authorList>
    </citation>
    <scope>X-RAY CRYSTALLOGRAPHY (2.85 ANGSTROMS) OF 1-124 IN COMPLEX WITH ZINC</scope>
    <scope>DOMAIN</scope>
    <scope>FUNCTION</scope>
</reference>
<reference evidence="18" key="12">
    <citation type="journal article" date="2020" name="Elife">
        <title>Structural basis for COMPASS recognition of an H2B-ubiquitinated nucleosome.</title>
        <authorList>
            <person name="Worden E.J."/>
            <person name="Zhang X."/>
            <person name="Wolberger C."/>
        </authorList>
    </citation>
    <scope>STRUCTURE BY ELECTRON MICROSCOPY (3.37 ANGSTROMS) OF 2-353 WITHIN THE CORE COMPASS H2B-UBIQUITIN NUCLEOSOME COMPLEX</scope>
    <scope>SUBUNIT</scope>
    <scope>FUNCTION</scope>
</reference>
<gene>
    <name evidence="13" type="primary">SPP1</name>
    <name evidence="12" type="synonym">CPS40</name>
    <name evidence="14" type="synonym">SAF41</name>
    <name type="ordered locus">YPL138C</name>
</gene>
<accession>Q03012</accession>
<accession>D6W3N0</accession>
<proteinExistence type="evidence at protein level"/>
<name>SPP1_YEAST</name>